<protein>
    <recommendedName>
        <fullName>Protein BDLF2</fullName>
    </recommendedName>
</protein>
<feature type="chain" id="PRO_0000116267" description="Protein BDLF2">
    <location>
        <begin position="1"/>
        <end position="420"/>
    </location>
</feature>
<feature type="topological domain" description="Intravirion">
    <location>
        <begin position="1"/>
        <end position="184"/>
    </location>
</feature>
<feature type="transmembrane region" description="Helical; Signal-anchor for type II membrane protein" evidence="1">
    <location>
        <begin position="185"/>
        <end position="205"/>
    </location>
</feature>
<feature type="topological domain" description="Virion surface">
    <location>
        <begin position="206"/>
        <end position="420"/>
    </location>
</feature>
<feature type="region of interest" description="Disordered" evidence="2">
    <location>
        <begin position="1"/>
        <end position="21"/>
    </location>
</feature>
<feature type="region of interest" description="Disordered" evidence="2">
    <location>
        <begin position="64"/>
        <end position="129"/>
    </location>
</feature>
<feature type="compositionally biased region" description="Low complexity" evidence="2">
    <location>
        <begin position="90"/>
        <end position="108"/>
    </location>
</feature>
<feature type="glycosylation site" description="N-linked (GlcNAc...) asparagine; by host" evidence="1">
    <location>
        <position position="258"/>
    </location>
</feature>
<feature type="glycosylation site" description="N-linked (GlcNAc...) asparagine; by host" evidence="1">
    <location>
        <position position="264"/>
    </location>
</feature>
<feature type="glycosylation site" description="N-linked (GlcNAc...) asparagine; by host" evidence="1">
    <location>
        <position position="300"/>
    </location>
</feature>
<feature type="glycosylation site" description="N-linked (GlcNAc...) asparagine; by host" evidence="1">
    <location>
        <position position="304"/>
    </location>
</feature>
<feature type="glycosylation site" description="N-linked (GlcNAc...) asparagine; by host" evidence="1">
    <location>
        <position position="371"/>
    </location>
</feature>
<feature type="glycosylation site" description="N-linked (GlcNAc...) asparagine; by host" evidence="1">
    <location>
        <position position="384"/>
    </location>
</feature>
<name>BDLF2_EBVB9</name>
<sequence>MVDEQVAVEHGTVSHTISREEDGVVHERRVLASGERVEVFYKAPAPRPREGRASTFHDFTVPAAAAVPGPEPEPEPHPPMPIHANGGGETKTNTQDQNQNQTTRTRTNAKAEERTAEMDDTMASSGGQRGAPISADLLSLSSLTGRMAAMAPSWMKSEVCGERMRFKEDVYDGEAETLAEPPRCFMLSFVFIYYCCYLAFLALLAFGFNPLFLPSFMPVGAKVLRGKGRDFGVPLSYGCPTNPFCKVYTLIPAVVINNVTYYPNNTDSHGGHGGFEAAALHVAALFESGCPNLQAVTNRNRTFNVTRASGRVERRLVQDMQRVLASAVVVMHHHCHYETYYVFDGVGPEFGTIPTPCFKDVLAFRPSLVTNCTAPLKTSVKGPNWSGAAGGMKRKQCRVDRLTDRSFPAYLEEVMYVMVQ</sequence>
<organismHost>
    <name type="scientific">Homo sapiens</name>
    <name type="common">Human</name>
    <dbReference type="NCBI Taxonomy" id="9606"/>
</organismHost>
<accession>P03225</accession>
<accession>Q777C4</accession>
<comment type="function">
    <text evidence="4">Rearranges cellular actin to increase intercellular contacts and thereby promote virus cell-to-cell spreading. Induce the outgrowth of long, branched plasma membrane fronds to create intercellular network for virion traffic. The fronds are actin based and RhoA-dependent.</text>
</comment>
<comment type="subunit">
    <text evidence="5">Interacts with BMRF2.</text>
</comment>
<comment type="subcellular location">
    <subcellularLocation>
        <location evidence="3 5">Virion membrane</location>
        <topology evidence="3 5">Single-pass type II membrane protein</topology>
    </subcellularLocation>
</comment>
<comment type="domain">
    <text>Plasma membrane remodeling is mediated by the cytoplasmic tail.</text>
</comment>
<comment type="similarity">
    <text evidence="6">Belongs to the herpesviridae BDLF2 family.</text>
</comment>
<reference key="1">
    <citation type="journal article" date="1984" name="Nature">
        <title>DNA sequence and expression of the B95-8 Epstein-Barr virus genome.</title>
        <authorList>
            <person name="Baer R."/>
            <person name="Bankier A.T."/>
            <person name="Biggin M.D."/>
            <person name="Deininger P.L."/>
            <person name="Farrell P.J."/>
            <person name="Gibson T.J."/>
            <person name="Hatfull G."/>
            <person name="Hudson G.S."/>
            <person name="Satchwell S.C."/>
            <person name="Seguin C."/>
            <person name="Tuffnell P.S."/>
            <person name="Barrell B.G."/>
        </authorList>
    </citation>
    <scope>NUCLEOTIDE SEQUENCE [LARGE SCALE GENOMIC DNA]</scope>
</reference>
<reference key="2">
    <citation type="journal article" date="2003" name="Virology">
        <title>Updated Epstein-Barr virus (EBV) DNA sequence and analysis of a promoter for the BART (CST, BARF0) RNAs of EBV.</title>
        <authorList>
            <person name="de Jesus O."/>
            <person name="Smith P.R."/>
            <person name="Spender L.C."/>
            <person name="Elgueta Karstegl C."/>
            <person name="Niller H.H."/>
            <person name="Huang D."/>
            <person name="Farrell P.J."/>
        </authorList>
    </citation>
    <scope>GENOME REANNOTATION</scope>
</reference>
<reference key="3">
    <citation type="journal article" date="2004" name="Proc. Natl. Acad. Sci. U.S.A.">
        <title>Proteins of purified Epstein-Barr virus.</title>
        <authorList>
            <person name="Johannsen E."/>
            <person name="Luftig M."/>
            <person name="Chase M.R."/>
            <person name="Weicksel S."/>
            <person name="Cahir-McFarland E."/>
            <person name="Illanes D."/>
            <person name="Sarracino D."/>
            <person name="Kieff E."/>
        </authorList>
    </citation>
    <scope>IDENTIFICATION</scope>
    <scope>SUBCELLULAR LOCATION</scope>
</reference>
<reference key="4">
    <citation type="journal article" date="2008" name="PLoS ONE">
        <title>A gamma-herpesvirus glycoprotein complex manipulates actin to promote viral spread.</title>
        <authorList>
            <person name="Gill M.B."/>
            <person name="Edgar R."/>
            <person name="May J.S."/>
            <person name="Stevenson P.G."/>
        </authorList>
    </citation>
    <scope>FUNCTION</scope>
</reference>
<reference key="5">
    <citation type="journal article" date="2009" name="Virology">
        <title>The BDLF2 protein of Epstein-Barr virus is a type II glycosylated envelope protein whose processing is dependent on coexpression with the BMRF2 protein.</title>
        <authorList>
            <person name="Gore M."/>
            <person name="Hutt-Fletcher L.M."/>
        </authorList>
    </citation>
    <scope>SUBCELLULAR LOCATION</scope>
    <scope>INTERACTION WITH BMRF2</scope>
</reference>
<dbReference type="EMBL" id="V01555">
    <property type="protein sequence ID" value="CAA24836.1"/>
    <property type="molecule type" value="Genomic_DNA"/>
</dbReference>
<dbReference type="EMBL" id="AJ507799">
    <property type="protein sequence ID" value="CAD53445.1"/>
    <property type="molecule type" value="Genomic_DNA"/>
</dbReference>
<dbReference type="PIR" id="G43044">
    <property type="entry name" value="QQBE44"/>
</dbReference>
<dbReference type="RefSeq" id="YP_401695.1">
    <property type="nucleotide sequence ID" value="NC_007605.1"/>
</dbReference>
<dbReference type="IntAct" id="P03225">
    <property type="interactions" value="79"/>
</dbReference>
<dbReference type="MINT" id="P03225"/>
<dbReference type="DNASU" id="3783693"/>
<dbReference type="GeneID" id="3783693"/>
<dbReference type="KEGG" id="vg:3783693"/>
<dbReference type="Proteomes" id="UP000153037">
    <property type="component" value="Segment"/>
</dbReference>
<dbReference type="GO" id="GO:0016020">
    <property type="term" value="C:membrane"/>
    <property type="evidence" value="ECO:0007669"/>
    <property type="project" value="UniProtKB-KW"/>
</dbReference>
<dbReference type="GO" id="GO:0019031">
    <property type="term" value="C:viral envelope"/>
    <property type="evidence" value="ECO:0007669"/>
    <property type="project" value="UniProtKB-KW"/>
</dbReference>
<dbReference type="GO" id="GO:0055036">
    <property type="term" value="C:virion membrane"/>
    <property type="evidence" value="ECO:0007669"/>
    <property type="project" value="UniProtKB-SubCell"/>
</dbReference>
<evidence type="ECO:0000255" key="1"/>
<evidence type="ECO:0000256" key="2">
    <source>
        <dbReference type="SAM" id="MobiDB-lite"/>
    </source>
</evidence>
<evidence type="ECO:0000269" key="3">
    <source>
    </source>
</evidence>
<evidence type="ECO:0000269" key="4">
    <source>
    </source>
</evidence>
<evidence type="ECO:0000269" key="5">
    <source>
    </source>
</evidence>
<evidence type="ECO:0000305" key="6"/>
<keyword id="KW-0325">Glycoprotein</keyword>
<keyword id="KW-0426">Late protein</keyword>
<keyword id="KW-0472">Membrane</keyword>
<keyword id="KW-1185">Reference proteome</keyword>
<keyword id="KW-0735">Signal-anchor</keyword>
<keyword id="KW-0812">Transmembrane</keyword>
<keyword id="KW-1133">Transmembrane helix</keyword>
<keyword id="KW-0261">Viral envelope protein</keyword>
<keyword id="KW-0946">Virion</keyword>
<organism>
    <name type="scientific">Epstein-Barr virus (strain B95-8)</name>
    <name type="common">HHV-4</name>
    <name type="synonym">Human herpesvirus 4</name>
    <dbReference type="NCBI Taxonomy" id="10377"/>
    <lineage>
        <taxon>Viruses</taxon>
        <taxon>Duplodnaviria</taxon>
        <taxon>Heunggongvirae</taxon>
        <taxon>Peploviricota</taxon>
        <taxon>Herviviricetes</taxon>
        <taxon>Herpesvirales</taxon>
        <taxon>Orthoherpesviridae</taxon>
        <taxon>Gammaherpesvirinae</taxon>
        <taxon>Lymphocryptovirus</taxon>
        <taxon>Lymphocryptovirus humangamma4</taxon>
        <taxon>Epstein-Barr virus (strain GD1)</taxon>
    </lineage>
</organism>
<gene>
    <name type="ORF">BDLF2</name>
</gene>
<proteinExistence type="evidence at protein level"/>